<evidence type="ECO:0000250" key="1"/>
<evidence type="ECO:0000255" key="2">
    <source>
        <dbReference type="PROSITE-ProRule" id="PRU00143"/>
    </source>
</evidence>
<evidence type="ECO:0000256" key="3">
    <source>
        <dbReference type="SAM" id="MobiDB-lite"/>
    </source>
</evidence>
<name>NHRF1_CHICK</name>
<organism>
    <name type="scientific">Gallus gallus</name>
    <name type="common">Chicken</name>
    <dbReference type="NCBI Taxonomy" id="9031"/>
    <lineage>
        <taxon>Eukaryota</taxon>
        <taxon>Metazoa</taxon>
        <taxon>Chordata</taxon>
        <taxon>Craniata</taxon>
        <taxon>Vertebrata</taxon>
        <taxon>Euteleostomi</taxon>
        <taxon>Archelosauria</taxon>
        <taxon>Archosauria</taxon>
        <taxon>Dinosauria</taxon>
        <taxon>Saurischia</taxon>
        <taxon>Theropoda</taxon>
        <taxon>Coelurosauria</taxon>
        <taxon>Aves</taxon>
        <taxon>Neognathae</taxon>
        <taxon>Galloanserae</taxon>
        <taxon>Galliformes</taxon>
        <taxon>Phasianidae</taxon>
        <taxon>Phasianinae</taxon>
        <taxon>Gallus</taxon>
    </lineage>
</organism>
<proteinExistence type="evidence at transcript level"/>
<comment type="function">
    <text evidence="1">Scaffold protein that connects plasma membrane proteins with members of the ezrin/moesin/radixin family and thereby helps to link them to the actin cytoskeleton and to regulate their surface expression. Was first known to play a role in the regulation of the activity and subcellular location of SLC9A3. May enhance Wnt signaling (By similarity).</text>
</comment>
<comment type="subcellular location">
    <subcellularLocation>
        <location>Endomembrane system</location>
        <topology>Peripheral membrane protein</topology>
    </subcellularLocation>
    <subcellularLocation>
        <location>Cell projection</location>
        <location>Filopodium</location>
    </subcellularLocation>
    <subcellularLocation>
        <location>Cell projection</location>
        <location>Ruffle</location>
    </subcellularLocation>
    <subcellularLocation>
        <location evidence="1">Cell projection</location>
        <location evidence="1">Microvillus</location>
    </subcellularLocation>
</comment>
<dbReference type="EMBL" id="AJ719570">
    <property type="protein sequence ID" value="CAG31229.1"/>
    <property type="molecule type" value="mRNA"/>
</dbReference>
<dbReference type="RefSeq" id="NP_001006424.1">
    <property type="nucleotide sequence ID" value="NM_001006424.1"/>
</dbReference>
<dbReference type="SMR" id="Q5ZM14"/>
<dbReference type="FunCoup" id="Q5ZM14">
    <property type="interactions" value="1945"/>
</dbReference>
<dbReference type="STRING" id="9031.ENSGALP00000066224"/>
<dbReference type="PaxDb" id="9031-ENSGALP00000012367"/>
<dbReference type="GeneID" id="422108"/>
<dbReference type="KEGG" id="gga:422108"/>
<dbReference type="CTD" id="422108"/>
<dbReference type="VEuPathDB" id="HostDB:geneid_422108"/>
<dbReference type="eggNOG" id="KOG3528">
    <property type="taxonomic scope" value="Eukaryota"/>
</dbReference>
<dbReference type="InParanoid" id="Q5ZM14"/>
<dbReference type="OrthoDB" id="10007415at2759"/>
<dbReference type="PhylomeDB" id="Q5ZM14"/>
<dbReference type="PRO" id="PR:Q5ZM14"/>
<dbReference type="Proteomes" id="UP000000539">
    <property type="component" value="Unassembled WGS sequence"/>
</dbReference>
<dbReference type="GO" id="GO:0016324">
    <property type="term" value="C:apical plasma membrane"/>
    <property type="evidence" value="ECO:0000318"/>
    <property type="project" value="GO_Central"/>
</dbReference>
<dbReference type="GO" id="GO:0071944">
    <property type="term" value="C:cell periphery"/>
    <property type="evidence" value="ECO:0000250"/>
    <property type="project" value="UniProtKB"/>
</dbReference>
<dbReference type="GO" id="GO:0005737">
    <property type="term" value="C:cytoplasm"/>
    <property type="evidence" value="ECO:0000250"/>
    <property type="project" value="UniProtKB"/>
</dbReference>
<dbReference type="GO" id="GO:0012505">
    <property type="term" value="C:endomembrane system"/>
    <property type="evidence" value="ECO:0007669"/>
    <property type="project" value="UniProtKB-SubCell"/>
</dbReference>
<dbReference type="GO" id="GO:0030175">
    <property type="term" value="C:filopodium"/>
    <property type="evidence" value="ECO:0007669"/>
    <property type="project" value="UniProtKB-SubCell"/>
</dbReference>
<dbReference type="GO" id="GO:0005902">
    <property type="term" value="C:microvillus"/>
    <property type="evidence" value="ECO:0000250"/>
    <property type="project" value="UniProtKB"/>
</dbReference>
<dbReference type="GO" id="GO:0031528">
    <property type="term" value="C:microvillus membrane"/>
    <property type="evidence" value="ECO:0000250"/>
    <property type="project" value="UniProtKB"/>
</dbReference>
<dbReference type="GO" id="GO:0001726">
    <property type="term" value="C:ruffle"/>
    <property type="evidence" value="ECO:0007669"/>
    <property type="project" value="UniProtKB-SubCell"/>
</dbReference>
<dbReference type="GO" id="GO:0017081">
    <property type="term" value="F:chloride channel regulator activity"/>
    <property type="evidence" value="ECO:0000250"/>
    <property type="project" value="UniProtKB"/>
</dbReference>
<dbReference type="GO" id="GO:0043495">
    <property type="term" value="F:protein-membrane adaptor activity"/>
    <property type="evidence" value="ECO:0000318"/>
    <property type="project" value="GO_Central"/>
</dbReference>
<dbReference type="GO" id="GO:0005102">
    <property type="term" value="F:signaling receptor binding"/>
    <property type="evidence" value="ECO:0000318"/>
    <property type="project" value="GO_Central"/>
</dbReference>
<dbReference type="GO" id="GO:0032782">
    <property type="term" value="P:bile acid secretion"/>
    <property type="evidence" value="ECO:0000250"/>
    <property type="project" value="UniProtKB"/>
</dbReference>
<dbReference type="GO" id="GO:0034635">
    <property type="term" value="P:glutathione transport"/>
    <property type="evidence" value="ECO:0000250"/>
    <property type="project" value="UniProtKB"/>
</dbReference>
<dbReference type="GO" id="GO:2000146">
    <property type="term" value="P:negative regulation of cell motility"/>
    <property type="evidence" value="ECO:0000250"/>
    <property type="project" value="UniProtKB"/>
</dbReference>
<dbReference type="GO" id="GO:0051898">
    <property type="term" value="P:negative regulation of phosphatidylinositol 3-kinase/protein kinase B signal transduction"/>
    <property type="evidence" value="ECO:0000250"/>
    <property type="project" value="UniProtKB"/>
</dbReference>
<dbReference type="GO" id="GO:0010642">
    <property type="term" value="P:negative regulation of platelet-derived growth factor receptor signaling pathway"/>
    <property type="evidence" value="ECO:0000250"/>
    <property type="project" value="UniProtKB"/>
</dbReference>
<dbReference type="GO" id="GO:0072659">
    <property type="term" value="P:protein localization to plasma membrane"/>
    <property type="evidence" value="ECO:0000318"/>
    <property type="project" value="GO_Central"/>
</dbReference>
<dbReference type="GO" id="GO:0045859">
    <property type="term" value="P:regulation of protein kinase activity"/>
    <property type="evidence" value="ECO:0000250"/>
    <property type="project" value="UniProtKB"/>
</dbReference>
<dbReference type="GO" id="GO:0070293">
    <property type="term" value="P:renal absorption"/>
    <property type="evidence" value="ECO:0000250"/>
    <property type="project" value="UniProtKB"/>
</dbReference>
<dbReference type="GO" id="GO:0016055">
    <property type="term" value="P:Wnt signaling pathway"/>
    <property type="evidence" value="ECO:0007669"/>
    <property type="project" value="UniProtKB-KW"/>
</dbReference>
<dbReference type="CDD" id="cd06768">
    <property type="entry name" value="PDZ_NHERF-like"/>
    <property type="match status" value="2"/>
</dbReference>
<dbReference type="FunFam" id="2.30.42.10:FF:000068">
    <property type="entry name" value="Na(+)/H(+) exchange regulatory cofactor NHE-RF"/>
    <property type="match status" value="2"/>
</dbReference>
<dbReference type="Gene3D" id="2.30.42.10">
    <property type="match status" value="2"/>
</dbReference>
<dbReference type="InterPro" id="IPR015098">
    <property type="entry name" value="EBP50_C"/>
</dbReference>
<dbReference type="InterPro" id="IPR051067">
    <property type="entry name" value="NHER"/>
</dbReference>
<dbReference type="InterPro" id="IPR017300">
    <property type="entry name" value="NHERF-1/NHERF-2"/>
</dbReference>
<dbReference type="InterPro" id="IPR001478">
    <property type="entry name" value="PDZ"/>
</dbReference>
<dbReference type="InterPro" id="IPR036034">
    <property type="entry name" value="PDZ_sf"/>
</dbReference>
<dbReference type="PANTHER" id="PTHR14191:SF7">
    <property type="entry name" value="NA(+)_H(+) EXCHANGE REGULATORY COFACTOR NHE-RF1"/>
    <property type="match status" value="1"/>
</dbReference>
<dbReference type="PANTHER" id="PTHR14191">
    <property type="entry name" value="PDZ DOMAIN CONTAINING PROTEIN"/>
    <property type="match status" value="1"/>
</dbReference>
<dbReference type="Pfam" id="PF09007">
    <property type="entry name" value="EBP50_C"/>
    <property type="match status" value="1"/>
</dbReference>
<dbReference type="Pfam" id="PF00595">
    <property type="entry name" value="PDZ"/>
    <property type="match status" value="2"/>
</dbReference>
<dbReference type="PIRSF" id="PIRSF037866">
    <property type="entry name" value="EBP50"/>
    <property type="match status" value="1"/>
</dbReference>
<dbReference type="SMART" id="SM00228">
    <property type="entry name" value="PDZ"/>
    <property type="match status" value="2"/>
</dbReference>
<dbReference type="SUPFAM" id="SSF50156">
    <property type="entry name" value="PDZ domain-like"/>
    <property type="match status" value="2"/>
</dbReference>
<dbReference type="PROSITE" id="PS50106">
    <property type="entry name" value="PDZ"/>
    <property type="match status" value="2"/>
</dbReference>
<gene>
    <name type="primary">NHERF1</name>
    <name type="synonym">NHERF</name>
    <name type="synonym">SLC9A3R1</name>
    <name type="ORF">RCJMB04_3g21</name>
</gene>
<feature type="chain" id="PRO_0000301266" description="Na(+)/H(+) exchange regulatory cofactor NHE-RF1">
    <location>
        <begin position="1"/>
        <end position="333"/>
    </location>
</feature>
<feature type="domain" description="PDZ 1" evidence="2">
    <location>
        <begin position="13"/>
        <end position="93"/>
    </location>
</feature>
<feature type="domain" description="PDZ 2" evidence="2">
    <location>
        <begin position="135"/>
        <end position="215"/>
    </location>
</feature>
<feature type="region of interest" description="Disordered" evidence="3">
    <location>
        <begin position="90"/>
        <end position="164"/>
    </location>
</feature>
<feature type="region of interest" description="Disordered" evidence="3">
    <location>
        <begin position="232"/>
        <end position="333"/>
    </location>
</feature>
<feature type="compositionally biased region" description="Basic and acidic residues" evidence="3">
    <location>
        <begin position="97"/>
        <end position="111"/>
    </location>
</feature>
<feature type="compositionally biased region" description="Low complexity" evidence="3">
    <location>
        <begin position="112"/>
        <end position="122"/>
    </location>
</feature>
<feature type="compositionally biased region" description="Basic and acidic residues" evidence="3">
    <location>
        <begin position="124"/>
        <end position="133"/>
    </location>
</feature>
<feature type="compositionally biased region" description="Basic and acidic residues" evidence="3">
    <location>
        <begin position="274"/>
        <end position="289"/>
    </location>
</feature>
<feature type="compositionally biased region" description="Basic and acidic residues" evidence="3">
    <location>
        <begin position="323"/>
        <end position="333"/>
    </location>
</feature>
<keyword id="KW-0966">Cell projection</keyword>
<keyword id="KW-0472">Membrane</keyword>
<keyword id="KW-1185">Reference proteome</keyword>
<keyword id="KW-0677">Repeat</keyword>
<keyword id="KW-0879">Wnt signaling pathway</keyword>
<protein>
    <recommendedName>
        <fullName>Na(+)/H(+) exchange regulatory cofactor NHE-RF1</fullName>
        <shortName>NHERF-1</shortName>
    </recommendedName>
    <alternativeName>
        <fullName>Ezrin-radixin-moesin-binding phosphoprotein 50</fullName>
        <shortName>EBP50</shortName>
    </alternativeName>
    <alternativeName>
        <fullName>Regulatory cofactor of Na(+)/H(+) exchanger</fullName>
    </alternativeName>
    <alternativeName>
        <fullName>Sodium-hydrogen exchanger regulatory factor 1</fullName>
    </alternativeName>
    <alternativeName>
        <fullName>Solute carrier family 9 isoform A3 regulatory factor 1</fullName>
    </alternativeName>
</protein>
<reference key="1">
    <citation type="journal article" date="2005" name="Genome Biol.">
        <title>Full-length cDNAs from chicken bursal lymphocytes to facilitate gene function analysis.</title>
        <authorList>
            <person name="Caldwell R.B."/>
            <person name="Kierzek A.M."/>
            <person name="Arakawa H."/>
            <person name="Bezzubov Y."/>
            <person name="Zaim J."/>
            <person name="Fiedler P."/>
            <person name="Kutter S."/>
            <person name="Blagodatski A."/>
            <person name="Kostovska D."/>
            <person name="Koter M."/>
            <person name="Plachy J."/>
            <person name="Carninci P."/>
            <person name="Hayashizaki Y."/>
            <person name="Buerstedde J.-M."/>
        </authorList>
    </citation>
    <scope>NUCLEOTIDE SEQUENCE [LARGE SCALE MRNA]</scope>
    <source>
        <strain>CB</strain>
        <tissue>Bursa of Fabricius</tissue>
    </source>
</reference>
<accession>Q5ZM14</accession>
<sequence length="333" mass="35805">MSSAPPGPAAPRLCCMEKGPDGYGFHLHGEKGKPGQYIRLVEAGSPAERSGLRAGDRLLEVDGTNVERESHQQVVERIRAAAGAVRLLVVQPQPEEQPPKTHSDPDGEAQREPPAAETPAAERSGPEERELRPRLCRIKKGPNGYGFNLHSEKSRPGQYVRAVDPDSPAEAAGLRAQDRIVEVNGTSVEGKQHADVVAAIKAGGDETKLLVVGVLADEFFKKCRVVPSEAHLAGPLPEPMANGDVEKENGGEPRLNSVSERPPSPALATSPEGSETHSEPDTQEGDKRSSAPSSLLDLDIPLAVAKERAHQKRTSKRAPQMDWSKKNELFSNL</sequence>